<comment type="catalytic activity">
    <reaction evidence="1">
        <text>D-serine = pyruvate + NH4(+)</text>
        <dbReference type="Rhea" id="RHEA:13977"/>
        <dbReference type="ChEBI" id="CHEBI:15361"/>
        <dbReference type="ChEBI" id="CHEBI:28938"/>
        <dbReference type="ChEBI" id="CHEBI:35247"/>
        <dbReference type="EC" id="4.3.1.18"/>
    </reaction>
</comment>
<comment type="cofactor">
    <cofactor evidence="1">
        <name>pyridoxal 5'-phosphate</name>
        <dbReference type="ChEBI" id="CHEBI:597326"/>
    </cofactor>
</comment>
<comment type="similarity">
    <text evidence="1">Belongs to the serine/threonine dehydratase family. DsdA subfamily.</text>
</comment>
<gene>
    <name evidence="1" type="primary">dsdA</name>
    <name type="ordered locus">ABC1954</name>
</gene>
<name>SDHD_SHOC1</name>
<reference key="1">
    <citation type="submission" date="2003-10" db="EMBL/GenBank/DDBJ databases">
        <title>The complete genome sequence of the alkaliphilic Bacillus clausii KSM-K16.</title>
        <authorList>
            <person name="Takaki Y."/>
            <person name="Kageyama Y."/>
            <person name="Shimamura S."/>
            <person name="Suzuki H."/>
            <person name="Nishi S."/>
            <person name="Hatada Y."/>
            <person name="Kawai S."/>
            <person name="Ito S."/>
            <person name="Horikoshi K."/>
        </authorList>
    </citation>
    <scope>NUCLEOTIDE SEQUENCE [LARGE SCALE GENOMIC DNA]</scope>
    <source>
        <strain>KSM-K16</strain>
    </source>
</reference>
<protein>
    <recommendedName>
        <fullName evidence="1">Probable D-serine dehydratase</fullName>
        <ecNumber evidence="1">4.3.1.18</ecNumber>
    </recommendedName>
    <alternativeName>
        <fullName evidence="1">D-serine deaminase</fullName>
        <shortName evidence="1">DSD</shortName>
    </alternativeName>
</protein>
<feature type="chain" id="PRO_0000185606" description="Probable D-serine dehydratase">
    <location>
        <begin position="1"/>
        <end position="440"/>
    </location>
</feature>
<feature type="modified residue" description="N6-(pyridoxal phosphate)lysine" evidence="1">
    <location>
        <position position="120"/>
    </location>
</feature>
<sequence length="440" mass="48073">MDIAGKNREQWLAAYPLLQQIVLTKEVWWANPNRQPASEGLARLSLKEEDVKEAEQRLRRFAPYIASVFPETKGAGGLIESPLIDIPTMKHKLDQRFGQNVPGRLLLKGDHALPISGSIKARGGIYEVLKHAESLLVDQQILTKQDDYSLIATDAVQSFFSSYAIVVGSTGNLGLSIGIISAKLGFRVTVHMSDDAKQWKKDMLREKGVRVVEHSADYSKAVEEGRKESDADPNSYFIDDEHSIDLFVGYAVAAFRLKEQLQEKGIAVTKDQPLHVYLPCGVGGGPGGVAFGLKLVFGDAVRCFFAEPTHSPCMLIGMLTGKHQHISVQDFGIDNQTAADGLAVGRPSGFVGRMMAPLLEGIYTIADPMLYTLLADLADAEGLYLEPSAVAGLYGPVQLEKRGLYTDAATHLVWATGGSMVPKEIMETDYQLGVNLRTEQ</sequence>
<proteinExistence type="inferred from homology"/>
<keyword id="KW-0456">Lyase</keyword>
<keyword id="KW-0663">Pyridoxal phosphate</keyword>
<keyword id="KW-1185">Reference proteome</keyword>
<dbReference type="EC" id="4.3.1.18" evidence="1"/>
<dbReference type="EMBL" id="AP006627">
    <property type="protein sequence ID" value="BAD64489.1"/>
    <property type="molecule type" value="Genomic_DNA"/>
</dbReference>
<dbReference type="RefSeq" id="WP_011246797.1">
    <property type="nucleotide sequence ID" value="NC_006582.1"/>
</dbReference>
<dbReference type="SMR" id="Q5WGL6"/>
<dbReference type="STRING" id="66692.ABC1954"/>
<dbReference type="KEGG" id="bcl:ABC1954"/>
<dbReference type="eggNOG" id="COG3048">
    <property type="taxonomic scope" value="Bacteria"/>
</dbReference>
<dbReference type="HOGENOM" id="CLU_035707_0_0_9"/>
<dbReference type="OrthoDB" id="9780546at2"/>
<dbReference type="Proteomes" id="UP000001168">
    <property type="component" value="Chromosome"/>
</dbReference>
<dbReference type="GO" id="GO:0008721">
    <property type="term" value="F:D-serine ammonia-lyase activity"/>
    <property type="evidence" value="ECO:0007669"/>
    <property type="project" value="UniProtKB-EC"/>
</dbReference>
<dbReference type="GO" id="GO:0016836">
    <property type="term" value="F:hydro-lyase activity"/>
    <property type="evidence" value="ECO:0007669"/>
    <property type="project" value="UniProtKB-UniRule"/>
</dbReference>
<dbReference type="GO" id="GO:0030170">
    <property type="term" value="F:pyridoxal phosphate binding"/>
    <property type="evidence" value="ECO:0007669"/>
    <property type="project" value="InterPro"/>
</dbReference>
<dbReference type="GO" id="GO:0036088">
    <property type="term" value="P:D-serine catabolic process"/>
    <property type="evidence" value="ECO:0007669"/>
    <property type="project" value="TreeGrafter"/>
</dbReference>
<dbReference type="GO" id="GO:0009097">
    <property type="term" value="P:isoleucine biosynthetic process"/>
    <property type="evidence" value="ECO:0007669"/>
    <property type="project" value="TreeGrafter"/>
</dbReference>
<dbReference type="Gene3D" id="3.40.50.1100">
    <property type="match status" value="2"/>
</dbReference>
<dbReference type="HAMAP" id="MF_01030">
    <property type="entry name" value="D_Ser_dehydrat"/>
    <property type="match status" value="1"/>
</dbReference>
<dbReference type="InterPro" id="IPR011780">
    <property type="entry name" value="D_Ser_am_lyase"/>
</dbReference>
<dbReference type="InterPro" id="IPR050147">
    <property type="entry name" value="Ser/Thr_Dehydratase"/>
</dbReference>
<dbReference type="InterPro" id="IPR000634">
    <property type="entry name" value="Ser/Thr_deHydtase_PyrdxlP-BS"/>
</dbReference>
<dbReference type="InterPro" id="IPR001926">
    <property type="entry name" value="TrpB-like_PALP"/>
</dbReference>
<dbReference type="InterPro" id="IPR036052">
    <property type="entry name" value="TrpB-like_PALP_sf"/>
</dbReference>
<dbReference type="NCBIfam" id="TIGR02035">
    <property type="entry name" value="D_Ser_am_lyase"/>
    <property type="match status" value="1"/>
</dbReference>
<dbReference type="NCBIfam" id="NF002823">
    <property type="entry name" value="PRK02991.1"/>
    <property type="match status" value="1"/>
</dbReference>
<dbReference type="PANTHER" id="PTHR48078:SF9">
    <property type="entry name" value="D-SERINE DEHYDRATASE"/>
    <property type="match status" value="1"/>
</dbReference>
<dbReference type="PANTHER" id="PTHR48078">
    <property type="entry name" value="THREONINE DEHYDRATASE, MITOCHONDRIAL-RELATED"/>
    <property type="match status" value="1"/>
</dbReference>
<dbReference type="Pfam" id="PF00291">
    <property type="entry name" value="PALP"/>
    <property type="match status" value="1"/>
</dbReference>
<dbReference type="SUPFAM" id="SSF53686">
    <property type="entry name" value="Tryptophan synthase beta subunit-like PLP-dependent enzymes"/>
    <property type="match status" value="1"/>
</dbReference>
<dbReference type="PROSITE" id="PS00165">
    <property type="entry name" value="DEHYDRATASE_SER_THR"/>
    <property type="match status" value="1"/>
</dbReference>
<organism>
    <name type="scientific">Shouchella clausii (strain KSM-K16)</name>
    <name type="common">Alkalihalobacillus clausii</name>
    <dbReference type="NCBI Taxonomy" id="66692"/>
    <lineage>
        <taxon>Bacteria</taxon>
        <taxon>Bacillati</taxon>
        <taxon>Bacillota</taxon>
        <taxon>Bacilli</taxon>
        <taxon>Bacillales</taxon>
        <taxon>Bacillaceae</taxon>
        <taxon>Shouchella</taxon>
    </lineage>
</organism>
<accession>Q5WGL6</accession>
<evidence type="ECO:0000255" key="1">
    <source>
        <dbReference type="HAMAP-Rule" id="MF_01030"/>
    </source>
</evidence>